<organism>
    <name type="scientific">Dictyostelium discoideum</name>
    <name type="common">Social amoeba</name>
    <dbReference type="NCBI Taxonomy" id="44689"/>
    <lineage>
        <taxon>Eukaryota</taxon>
        <taxon>Amoebozoa</taxon>
        <taxon>Evosea</taxon>
        <taxon>Eumycetozoa</taxon>
        <taxon>Dictyostelia</taxon>
        <taxon>Dictyosteliales</taxon>
        <taxon>Dictyosteliaceae</taxon>
        <taxon>Dictyostelium</taxon>
    </lineage>
</organism>
<keyword id="KW-0175">Coiled coil</keyword>
<keyword id="KW-0325">Glycoprotein</keyword>
<keyword id="KW-0472">Membrane</keyword>
<keyword id="KW-1185">Reference proteome</keyword>
<keyword id="KW-0812">Transmembrane</keyword>
<keyword id="KW-1133">Transmembrane helix</keyword>
<accession>Q556Z9</accession>
<accession>Q86JS6</accession>
<feature type="chain" id="PRO_0000393723" description="Transmembrane protein DDB_G0273707/DDB_G0273361">
    <location>
        <begin position="1"/>
        <end position="311"/>
    </location>
</feature>
<feature type="transmembrane region" description="Helical" evidence="1">
    <location>
        <begin position="150"/>
        <end position="170"/>
    </location>
</feature>
<feature type="transmembrane region" description="Helical" evidence="1">
    <location>
        <begin position="181"/>
        <end position="201"/>
    </location>
</feature>
<feature type="transmembrane region" description="Helical" evidence="1">
    <location>
        <begin position="208"/>
        <end position="228"/>
    </location>
</feature>
<feature type="transmembrane region" description="Helical" evidence="1">
    <location>
        <begin position="235"/>
        <end position="255"/>
    </location>
</feature>
<feature type="transmembrane region" description="Helical" evidence="1">
    <location>
        <begin position="276"/>
        <end position="296"/>
    </location>
</feature>
<feature type="region of interest" description="Disordered" evidence="2">
    <location>
        <begin position="1"/>
        <end position="113"/>
    </location>
</feature>
<feature type="coiled-coil region" evidence="1">
    <location>
        <begin position="95"/>
        <end position="124"/>
    </location>
</feature>
<feature type="compositionally biased region" description="Polar residues" evidence="2">
    <location>
        <begin position="9"/>
        <end position="18"/>
    </location>
</feature>
<feature type="compositionally biased region" description="Low complexity" evidence="2">
    <location>
        <begin position="37"/>
        <end position="67"/>
    </location>
</feature>
<feature type="compositionally biased region" description="Low complexity" evidence="2">
    <location>
        <begin position="76"/>
        <end position="111"/>
    </location>
</feature>
<feature type="glycosylation site" description="N-linked (GlcNAc...) asparagine" evidence="1">
    <location>
        <position position="8"/>
    </location>
</feature>
<feature type="glycosylation site" description="N-linked (GlcNAc...) asparagine" evidence="1">
    <location>
        <position position="35"/>
    </location>
</feature>
<feature type="glycosylation site" description="N-linked (GlcNAc...) asparagine" evidence="1">
    <location>
        <position position="38"/>
    </location>
</feature>
<feature type="glycosylation site" description="N-linked (GlcNAc...) asparagine" evidence="1">
    <location>
        <position position="62"/>
    </location>
</feature>
<feature type="glycosylation site" description="N-linked (GlcNAc...) asparagine" evidence="1">
    <location>
        <position position="76"/>
    </location>
</feature>
<reference key="1">
    <citation type="journal article" date="2002" name="Nature">
        <title>Sequence and analysis of chromosome 2 of Dictyostelium discoideum.</title>
        <authorList>
            <person name="Gloeckner G."/>
            <person name="Eichinger L."/>
            <person name="Szafranski K."/>
            <person name="Pachebat J.A."/>
            <person name="Bankier A.T."/>
            <person name="Dear P.H."/>
            <person name="Lehmann R."/>
            <person name="Baumgart C."/>
            <person name="Parra G."/>
            <person name="Abril J.F."/>
            <person name="Guigo R."/>
            <person name="Kumpf K."/>
            <person name="Tunggal B."/>
            <person name="Cox E.C."/>
            <person name="Quail M.A."/>
            <person name="Platzer M."/>
            <person name="Rosenthal A."/>
            <person name="Noegel A.A."/>
        </authorList>
    </citation>
    <scope>NUCLEOTIDE SEQUENCE [LARGE SCALE GENOMIC DNA]</scope>
    <source>
        <strain>AX4</strain>
    </source>
</reference>
<reference key="2">
    <citation type="journal article" date="2005" name="Nature">
        <title>The genome of the social amoeba Dictyostelium discoideum.</title>
        <authorList>
            <person name="Eichinger L."/>
            <person name="Pachebat J.A."/>
            <person name="Gloeckner G."/>
            <person name="Rajandream M.A."/>
            <person name="Sucgang R."/>
            <person name="Berriman M."/>
            <person name="Song J."/>
            <person name="Olsen R."/>
            <person name="Szafranski K."/>
            <person name="Xu Q."/>
            <person name="Tunggal B."/>
            <person name="Kummerfeld S."/>
            <person name="Madera M."/>
            <person name="Konfortov B.A."/>
            <person name="Rivero F."/>
            <person name="Bankier A.T."/>
            <person name="Lehmann R."/>
            <person name="Hamlin N."/>
            <person name="Davies R."/>
            <person name="Gaudet P."/>
            <person name="Fey P."/>
            <person name="Pilcher K."/>
            <person name="Chen G."/>
            <person name="Saunders D."/>
            <person name="Sodergren E.J."/>
            <person name="Davis P."/>
            <person name="Kerhornou A."/>
            <person name="Nie X."/>
            <person name="Hall N."/>
            <person name="Anjard C."/>
            <person name="Hemphill L."/>
            <person name="Bason N."/>
            <person name="Farbrother P."/>
            <person name="Desany B."/>
            <person name="Just E."/>
            <person name="Morio T."/>
            <person name="Rost R."/>
            <person name="Churcher C.M."/>
            <person name="Cooper J."/>
            <person name="Haydock S."/>
            <person name="van Driessche N."/>
            <person name="Cronin A."/>
            <person name="Goodhead I."/>
            <person name="Muzny D.M."/>
            <person name="Mourier T."/>
            <person name="Pain A."/>
            <person name="Lu M."/>
            <person name="Harper D."/>
            <person name="Lindsay R."/>
            <person name="Hauser H."/>
            <person name="James K.D."/>
            <person name="Quiles M."/>
            <person name="Madan Babu M."/>
            <person name="Saito T."/>
            <person name="Buchrieser C."/>
            <person name="Wardroper A."/>
            <person name="Felder M."/>
            <person name="Thangavelu M."/>
            <person name="Johnson D."/>
            <person name="Knights A."/>
            <person name="Loulseged H."/>
            <person name="Mungall K.L."/>
            <person name="Oliver K."/>
            <person name="Price C."/>
            <person name="Quail M.A."/>
            <person name="Urushihara H."/>
            <person name="Hernandez J."/>
            <person name="Rabbinowitsch E."/>
            <person name="Steffen D."/>
            <person name="Sanders M."/>
            <person name="Ma J."/>
            <person name="Kohara Y."/>
            <person name="Sharp S."/>
            <person name="Simmonds M.N."/>
            <person name="Spiegler S."/>
            <person name="Tivey A."/>
            <person name="Sugano S."/>
            <person name="White B."/>
            <person name="Walker D."/>
            <person name="Woodward J.R."/>
            <person name="Winckler T."/>
            <person name="Tanaka Y."/>
            <person name="Shaulsky G."/>
            <person name="Schleicher M."/>
            <person name="Weinstock G.M."/>
            <person name="Rosenthal A."/>
            <person name="Cox E.C."/>
            <person name="Chisholm R.L."/>
            <person name="Gibbs R.A."/>
            <person name="Loomis W.F."/>
            <person name="Platzer M."/>
            <person name="Kay R.R."/>
            <person name="Williams J.G."/>
            <person name="Dear P.H."/>
            <person name="Noegel A.A."/>
            <person name="Barrell B.G."/>
            <person name="Kuspa A."/>
        </authorList>
    </citation>
    <scope>NUCLEOTIDE SEQUENCE [LARGE SCALE GENOMIC DNA]</scope>
    <source>
        <strain>AX4</strain>
    </source>
</reference>
<proteinExistence type="predicted"/>
<gene>
    <name type="ORF">DDB_G0273707</name>
</gene>
<gene>
    <name type="ORF">DDB_G0273361</name>
</gene>
<dbReference type="EMBL" id="AAFI02000011">
    <property type="protein sequence ID" value="EAL70544.2"/>
    <property type="molecule type" value="Genomic_DNA"/>
</dbReference>
<dbReference type="EMBL" id="AAFI02000009">
    <property type="protein sequence ID" value="EAL70898.2"/>
    <property type="molecule type" value="Genomic_DNA"/>
</dbReference>
<dbReference type="RefSeq" id="XP_644470.2">
    <property type="nucleotide sequence ID" value="XM_639378.2"/>
</dbReference>
<dbReference type="RefSeq" id="XP_644780.2">
    <property type="nucleotide sequence ID" value="XM_639688.2"/>
</dbReference>
<dbReference type="FunCoup" id="Q556Z9">
    <property type="interactions" value="1"/>
</dbReference>
<dbReference type="GlyGen" id="Q556Z9">
    <property type="glycosylation" value="5 sites"/>
</dbReference>
<dbReference type="PaxDb" id="44689-DDB0266919"/>
<dbReference type="EnsemblProtists" id="EAL70544">
    <property type="protein sequence ID" value="EAL70544"/>
    <property type="gene ID" value="DDB_G0273707"/>
</dbReference>
<dbReference type="EnsemblProtists" id="EAL70898">
    <property type="protein sequence ID" value="EAL70898"/>
    <property type="gene ID" value="DDB_G0273361"/>
</dbReference>
<dbReference type="GeneID" id="8618882"/>
<dbReference type="GeneID" id="8619095"/>
<dbReference type="KEGG" id="ddi:DDB_G0273361"/>
<dbReference type="KEGG" id="ddi:DDB_G0273707"/>
<dbReference type="dictyBase" id="DDB_G0273361"/>
<dbReference type="dictyBase" id="DDB_G0273707"/>
<dbReference type="VEuPathDB" id="AmoebaDB:DDB_G0273361"/>
<dbReference type="eggNOG" id="ENOG502S3SU">
    <property type="taxonomic scope" value="Eukaryota"/>
</dbReference>
<dbReference type="HOGENOM" id="CLU_895520_0_0_1"/>
<dbReference type="InParanoid" id="Q556Z9"/>
<dbReference type="OMA" id="MSAEQRW"/>
<dbReference type="PhylomeDB" id="Q556Z9"/>
<dbReference type="PRO" id="PR:Q556Z9"/>
<dbReference type="Proteomes" id="UP000002195">
    <property type="component" value="Chromosome 2"/>
</dbReference>
<dbReference type="GO" id="GO:0016020">
    <property type="term" value="C:membrane"/>
    <property type="evidence" value="ECO:0007669"/>
    <property type="project" value="UniProtKB-SubCell"/>
</dbReference>
<dbReference type="InterPro" id="IPR007065">
    <property type="entry name" value="HPP"/>
</dbReference>
<dbReference type="PANTHER" id="PTHR33741">
    <property type="entry name" value="TRANSMEMBRANE PROTEIN DDB_G0269096-RELATED"/>
    <property type="match status" value="1"/>
</dbReference>
<dbReference type="PANTHER" id="PTHR33741:SF5">
    <property type="entry name" value="TRANSMEMBRANE PROTEIN DDB_G0269096-RELATED"/>
    <property type="match status" value="1"/>
</dbReference>
<dbReference type="Pfam" id="PF04982">
    <property type="entry name" value="TM_HPP"/>
    <property type="match status" value="1"/>
</dbReference>
<evidence type="ECO:0000255" key="1"/>
<evidence type="ECO:0000256" key="2">
    <source>
        <dbReference type="SAM" id="MobiDB-lite"/>
    </source>
</evidence>
<evidence type="ECO:0000305" key="3"/>
<protein>
    <recommendedName>
        <fullName>Transmembrane protein DDB_G0273707/DDB_G0273361</fullName>
    </recommendedName>
</protein>
<comment type="subcellular location">
    <subcellularLocation>
        <location evidence="3">Membrane</location>
        <topology evidence="3">Multi-pass membrane protein</topology>
    </subcellularLocation>
</comment>
<comment type="caution">
    <text evidence="3">The gene for this protein is duplicated in strains AX3 and AX4. These strains contain a duplication of a segment of 750 kb of chromosome 2 compared to the corresponding sequence in strain AX2.</text>
</comment>
<sequence length="311" mass="34759">MNEIEVDNLSHTNKNVATDNINNNNNDIELETIPNDSNNSNNNNNNNNNNNNNNNNNNNNNNNSNSNDIELETEPNNSNNNNNNNNNNNNNNNNNNNNNNNNNNNNNNKNENNNKIKNEKINILLSIKLYFIQYFKKWKGGEKSPVRADLEEIGWSWLSSFIGILVLALLHYRVTVEKETIFLLGSFAASAVLIFGAPKSPLAQPRNLVLGHIVSATVGSIIRVALVYTNAQTEVACALAVSLAIVGMHFTKSIHPPGGATALICVMSAEQRWRGFYYIFVPVASGSLTMLLTALIVNNFARKRKYPVFWW</sequence>
<name>Y3361_DICDI</name>